<name>NAC66_ARATH</name>
<gene>
    <name type="primary">NAC066</name>
    <name type="synonym">NST2</name>
    <name type="ordered locus">At3g61910</name>
    <name type="ORF">F21F14.80</name>
</gene>
<evidence type="ECO:0000255" key="1">
    <source>
        <dbReference type="PROSITE-ProRule" id="PRU00353"/>
    </source>
</evidence>
<evidence type="ECO:0000269" key="2">
    <source>
    </source>
</evidence>
<evidence type="ECO:0000305" key="3"/>
<feature type="chain" id="PRO_0000234357" description="NAC domain-containing protein 66">
    <location>
        <begin position="1"/>
        <end position="334"/>
    </location>
</feature>
<feature type="domain" description="NAC" evidence="1">
    <location>
        <begin position="11"/>
        <end position="175"/>
    </location>
</feature>
<feature type="DNA-binding region" evidence="1">
    <location>
        <begin position="111"/>
        <end position="181"/>
    </location>
</feature>
<feature type="sequence conflict" description="In Ref. 3; AAM60909." evidence="3" ref="3">
    <original>Y</original>
    <variation>F</variation>
    <location>
        <position position="73"/>
    </location>
</feature>
<feature type="sequence conflict" description="In Ref. 3; AAM60909." evidence="3" ref="3">
    <original>G</original>
    <variation>D</variation>
    <location>
        <position position="108"/>
    </location>
</feature>
<feature type="sequence conflict" description="In Ref. 3; AAM60909." evidence="3" ref="3">
    <original>H</original>
    <variation>D</variation>
    <location>
        <position position="151"/>
    </location>
</feature>
<feature type="sequence conflict" description="In Ref. 3; AAM60909." evidence="3" ref="3">
    <original>W</original>
    <variation>R</variation>
    <location>
        <position position="240"/>
    </location>
</feature>
<feature type="sequence conflict" description="In Ref. 3; AAM60909." evidence="3" ref="3">
    <original>N</original>
    <variation>S</variation>
    <location>
        <position position="286"/>
    </location>
</feature>
<feature type="sequence conflict" description="In Ref. 3; AAM60909." evidence="3" ref="3">
    <original>N</original>
    <variation>H</variation>
    <location>
        <position position="302"/>
    </location>
</feature>
<proteinExistence type="evidence at transcript level"/>
<comment type="function">
    <text evidence="2">Transcription activator of genes involved in biosynthesis of secondary walls. Together with NST1, required for the secondary cell wall thickening of the anther endocethium, which is necessary for anther dehiscence. May also regulate the secondary cell wall lignification of other tissues such as tracheary elements.</text>
</comment>
<comment type="subcellular location">
    <subcellularLocation>
        <location evidence="3">Nucleus</location>
    </subcellularLocation>
</comment>
<comment type="tissue specificity">
    <text evidence="2">Mostly expressed in anthers. Also present in pollen, base of siliques and inflorescence stems.</text>
</comment>
<comment type="domain">
    <text>The NAC domain includes a DNA-binding domain and a dimerization domain.</text>
</comment>
<protein>
    <recommendedName>
        <fullName>NAC domain-containing protein 66</fullName>
        <shortName>ANAC066</shortName>
    </recommendedName>
    <alternativeName>
        <fullName>Protein NAC SECONDARY WALL THICKENING PROMOTING FACTOR 2</fullName>
    </alternativeName>
</protein>
<organism>
    <name type="scientific">Arabidopsis thaliana</name>
    <name type="common">Mouse-ear cress</name>
    <dbReference type="NCBI Taxonomy" id="3702"/>
    <lineage>
        <taxon>Eukaryota</taxon>
        <taxon>Viridiplantae</taxon>
        <taxon>Streptophyta</taxon>
        <taxon>Embryophyta</taxon>
        <taxon>Tracheophyta</taxon>
        <taxon>Spermatophyta</taxon>
        <taxon>Magnoliopsida</taxon>
        <taxon>eudicotyledons</taxon>
        <taxon>Gunneridae</taxon>
        <taxon>Pentapetalae</taxon>
        <taxon>rosids</taxon>
        <taxon>malvids</taxon>
        <taxon>Brassicales</taxon>
        <taxon>Brassicaceae</taxon>
        <taxon>Camelineae</taxon>
        <taxon>Arabidopsis</taxon>
    </lineage>
</organism>
<sequence>MNISVNGQSQVPPGFRFHPTEEELLKYYLRKKISNIKIDLDVIPDIDLNKLEPWDIQEMCKIGTTPQNDWYFYSHKDKKYPTGTRTNRATTVGFWKATGRDKTIYTNGDRIGMRKTLVFYKGRAPHGQKSDWIMHEYRLDESVLISSCGDHDVNVETCDVIGSDEGWVVCRVFKKNNLCKNMISSSPASSVKTPSFNEETIEQLLEVMGQSCKGEIVLDPFLKLPNLECHNNTTITSYQWLIDDQVNNCHVSKVMDPSFITSWAALDRLVASQLNGPNSYSIPAVNETSQSPYHGLNRSGCNTGLTPDYYIPEIDLWNEADFARTTCHLLNGSG</sequence>
<keyword id="KW-0238">DNA-binding</keyword>
<keyword id="KW-0539">Nucleus</keyword>
<keyword id="KW-1185">Reference proteome</keyword>
<keyword id="KW-0804">Transcription</keyword>
<keyword id="KW-0805">Transcription regulation</keyword>
<dbReference type="EMBL" id="AL138642">
    <property type="protein sequence ID" value="CAB71898.1"/>
    <property type="molecule type" value="Genomic_DNA"/>
</dbReference>
<dbReference type="EMBL" id="CP002686">
    <property type="protein sequence ID" value="AEE80278.1"/>
    <property type="molecule type" value="Genomic_DNA"/>
</dbReference>
<dbReference type="EMBL" id="AY084323">
    <property type="protein sequence ID" value="AAM60909.1"/>
    <property type="molecule type" value="mRNA"/>
</dbReference>
<dbReference type="PIR" id="T47983">
    <property type="entry name" value="T47983"/>
</dbReference>
<dbReference type="RefSeq" id="NP_191750.1">
    <property type="nucleotide sequence ID" value="NM_116056.2"/>
</dbReference>
<dbReference type="SMR" id="Q9M274"/>
<dbReference type="BioGRID" id="10678">
    <property type="interactions" value="216"/>
</dbReference>
<dbReference type="IntAct" id="Q9M274">
    <property type="interactions" value="216"/>
</dbReference>
<dbReference type="STRING" id="3702.Q9M274"/>
<dbReference type="PaxDb" id="3702-AT3G61910.1"/>
<dbReference type="EnsemblPlants" id="AT3G61910.1">
    <property type="protein sequence ID" value="AT3G61910.1"/>
    <property type="gene ID" value="AT3G61910"/>
</dbReference>
<dbReference type="GeneID" id="825364"/>
<dbReference type="Gramene" id="AT3G61910.1">
    <property type="protein sequence ID" value="AT3G61910.1"/>
    <property type="gene ID" value="AT3G61910"/>
</dbReference>
<dbReference type="KEGG" id="ath:AT3G61910"/>
<dbReference type="Araport" id="AT3G61910"/>
<dbReference type="TAIR" id="AT3G61910">
    <property type="gene designation" value="NAC066"/>
</dbReference>
<dbReference type="eggNOG" id="ENOG502QSBA">
    <property type="taxonomic scope" value="Eukaryota"/>
</dbReference>
<dbReference type="HOGENOM" id="CLU_035664_1_1_1"/>
<dbReference type="InParanoid" id="Q9M274"/>
<dbReference type="OMA" id="LPNLECH"/>
<dbReference type="PhylomeDB" id="Q9M274"/>
<dbReference type="PRO" id="PR:Q9M274"/>
<dbReference type="Proteomes" id="UP000006548">
    <property type="component" value="Chromosome 3"/>
</dbReference>
<dbReference type="ExpressionAtlas" id="Q9M274">
    <property type="expression patterns" value="baseline and differential"/>
</dbReference>
<dbReference type="GO" id="GO:0005634">
    <property type="term" value="C:nucleus"/>
    <property type="evidence" value="ECO:0007669"/>
    <property type="project" value="UniProtKB-SubCell"/>
</dbReference>
<dbReference type="GO" id="GO:0003700">
    <property type="term" value="F:DNA-binding transcription factor activity"/>
    <property type="evidence" value="ECO:0000250"/>
    <property type="project" value="TAIR"/>
</dbReference>
<dbReference type="GO" id="GO:0000976">
    <property type="term" value="F:transcription cis-regulatory region binding"/>
    <property type="evidence" value="ECO:0000353"/>
    <property type="project" value="TAIR"/>
</dbReference>
<dbReference type="GO" id="GO:0009834">
    <property type="term" value="P:plant-type secondary cell wall biogenesis"/>
    <property type="evidence" value="ECO:0000315"/>
    <property type="project" value="TAIR"/>
</dbReference>
<dbReference type="GO" id="GO:0045893">
    <property type="term" value="P:positive regulation of DNA-templated transcription"/>
    <property type="evidence" value="ECO:0000314"/>
    <property type="project" value="TAIR"/>
</dbReference>
<dbReference type="FunFam" id="2.170.150.80:FF:000003">
    <property type="entry name" value="NAC domain-containing protein"/>
    <property type="match status" value="1"/>
</dbReference>
<dbReference type="Gene3D" id="2.170.150.80">
    <property type="entry name" value="NAC domain"/>
    <property type="match status" value="1"/>
</dbReference>
<dbReference type="InterPro" id="IPR003441">
    <property type="entry name" value="NAC-dom"/>
</dbReference>
<dbReference type="InterPro" id="IPR036093">
    <property type="entry name" value="NAC_dom_sf"/>
</dbReference>
<dbReference type="PANTHER" id="PTHR31744:SF221">
    <property type="entry name" value="NAC DOMAIN-CONTAINING PROTEIN 43-LIKE"/>
    <property type="match status" value="1"/>
</dbReference>
<dbReference type="PANTHER" id="PTHR31744">
    <property type="entry name" value="PROTEIN CUP-SHAPED COTYLEDON 2-RELATED"/>
    <property type="match status" value="1"/>
</dbReference>
<dbReference type="Pfam" id="PF02365">
    <property type="entry name" value="NAM"/>
    <property type="match status" value="1"/>
</dbReference>
<dbReference type="SUPFAM" id="SSF101941">
    <property type="entry name" value="NAC domain"/>
    <property type="match status" value="1"/>
</dbReference>
<dbReference type="PROSITE" id="PS51005">
    <property type="entry name" value="NAC"/>
    <property type="match status" value="1"/>
</dbReference>
<accession>Q9M274</accession>
<accession>Q8LGE1</accession>
<reference key="1">
    <citation type="journal article" date="2000" name="Nature">
        <title>Sequence and analysis of chromosome 3 of the plant Arabidopsis thaliana.</title>
        <authorList>
            <person name="Salanoubat M."/>
            <person name="Lemcke K."/>
            <person name="Rieger M."/>
            <person name="Ansorge W."/>
            <person name="Unseld M."/>
            <person name="Fartmann B."/>
            <person name="Valle G."/>
            <person name="Bloecker H."/>
            <person name="Perez-Alonso M."/>
            <person name="Obermaier B."/>
            <person name="Delseny M."/>
            <person name="Boutry M."/>
            <person name="Grivell L.A."/>
            <person name="Mache R."/>
            <person name="Puigdomenech P."/>
            <person name="De Simone V."/>
            <person name="Choisne N."/>
            <person name="Artiguenave F."/>
            <person name="Robert C."/>
            <person name="Brottier P."/>
            <person name="Wincker P."/>
            <person name="Cattolico L."/>
            <person name="Weissenbach J."/>
            <person name="Saurin W."/>
            <person name="Quetier F."/>
            <person name="Schaefer M."/>
            <person name="Mueller-Auer S."/>
            <person name="Gabel C."/>
            <person name="Fuchs M."/>
            <person name="Benes V."/>
            <person name="Wurmbach E."/>
            <person name="Drzonek H."/>
            <person name="Erfle H."/>
            <person name="Jordan N."/>
            <person name="Bangert S."/>
            <person name="Wiedelmann R."/>
            <person name="Kranz H."/>
            <person name="Voss H."/>
            <person name="Holland R."/>
            <person name="Brandt P."/>
            <person name="Nyakatura G."/>
            <person name="Vezzi A."/>
            <person name="D'Angelo M."/>
            <person name="Pallavicini A."/>
            <person name="Toppo S."/>
            <person name="Simionati B."/>
            <person name="Conrad A."/>
            <person name="Hornischer K."/>
            <person name="Kauer G."/>
            <person name="Loehnert T.-H."/>
            <person name="Nordsiek G."/>
            <person name="Reichelt J."/>
            <person name="Scharfe M."/>
            <person name="Schoen O."/>
            <person name="Bargues M."/>
            <person name="Terol J."/>
            <person name="Climent J."/>
            <person name="Navarro P."/>
            <person name="Collado C."/>
            <person name="Perez-Perez A."/>
            <person name="Ottenwaelder B."/>
            <person name="Duchemin D."/>
            <person name="Cooke R."/>
            <person name="Laudie M."/>
            <person name="Berger-Llauro C."/>
            <person name="Purnelle B."/>
            <person name="Masuy D."/>
            <person name="de Haan M."/>
            <person name="Maarse A.C."/>
            <person name="Alcaraz J.-P."/>
            <person name="Cottet A."/>
            <person name="Casacuberta E."/>
            <person name="Monfort A."/>
            <person name="Argiriou A."/>
            <person name="Flores M."/>
            <person name="Liguori R."/>
            <person name="Vitale D."/>
            <person name="Mannhaupt G."/>
            <person name="Haase D."/>
            <person name="Schoof H."/>
            <person name="Rudd S."/>
            <person name="Zaccaria P."/>
            <person name="Mewes H.-W."/>
            <person name="Mayer K.F.X."/>
            <person name="Kaul S."/>
            <person name="Town C.D."/>
            <person name="Koo H.L."/>
            <person name="Tallon L.J."/>
            <person name="Jenkins J."/>
            <person name="Rooney T."/>
            <person name="Rizzo M."/>
            <person name="Walts A."/>
            <person name="Utterback T."/>
            <person name="Fujii C.Y."/>
            <person name="Shea T.P."/>
            <person name="Creasy T.H."/>
            <person name="Haas B."/>
            <person name="Maiti R."/>
            <person name="Wu D."/>
            <person name="Peterson J."/>
            <person name="Van Aken S."/>
            <person name="Pai G."/>
            <person name="Militscher J."/>
            <person name="Sellers P."/>
            <person name="Gill J.E."/>
            <person name="Feldblyum T.V."/>
            <person name="Preuss D."/>
            <person name="Lin X."/>
            <person name="Nierman W.C."/>
            <person name="Salzberg S.L."/>
            <person name="White O."/>
            <person name="Venter J.C."/>
            <person name="Fraser C.M."/>
            <person name="Kaneko T."/>
            <person name="Nakamura Y."/>
            <person name="Sato S."/>
            <person name="Kato T."/>
            <person name="Asamizu E."/>
            <person name="Sasamoto S."/>
            <person name="Kimura T."/>
            <person name="Idesawa K."/>
            <person name="Kawashima K."/>
            <person name="Kishida Y."/>
            <person name="Kiyokawa C."/>
            <person name="Kohara M."/>
            <person name="Matsumoto M."/>
            <person name="Matsuno A."/>
            <person name="Muraki A."/>
            <person name="Nakayama S."/>
            <person name="Nakazaki N."/>
            <person name="Shinpo S."/>
            <person name="Takeuchi C."/>
            <person name="Wada T."/>
            <person name="Watanabe A."/>
            <person name="Yamada M."/>
            <person name="Yasuda M."/>
            <person name="Tabata S."/>
        </authorList>
    </citation>
    <scope>NUCLEOTIDE SEQUENCE [LARGE SCALE GENOMIC DNA]</scope>
    <source>
        <strain>cv. Columbia</strain>
    </source>
</reference>
<reference key="2">
    <citation type="journal article" date="2017" name="Plant J.">
        <title>Araport11: a complete reannotation of the Arabidopsis thaliana reference genome.</title>
        <authorList>
            <person name="Cheng C.Y."/>
            <person name="Krishnakumar V."/>
            <person name="Chan A.P."/>
            <person name="Thibaud-Nissen F."/>
            <person name="Schobel S."/>
            <person name="Town C.D."/>
        </authorList>
    </citation>
    <scope>GENOME REANNOTATION</scope>
    <source>
        <strain>cv. Columbia</strain>
    </source>
</reference>
<reference key="3">
    <citation type="submission" date="2002-03" db="EMBL/GenBank/DDBJ databases">
        <title>Full-length cDNA from Arabidopsis thaliana.</title>
        <authorList>
            <person name="Brover V."/>
            <person name="Troukhan M."/>
            <person name="Alexandrov N."/>
            <person name="Lu Y.-P."/>
            <person name="Flavell R."/>
            <person name="Feldmann K.A."/>
        </authorList>
    </citation>
    <scope>NUCLEOTIDE SEQUENCE [LARGE SCALE MRNA]</scope>
</reference>
<reference key="4">
    <citation type="journal article" date="2003" name="DNA Res.">
        <title>Comprehensive analysis of NAC family genes in Oryza sativa and Arabidopsis thaliana.</title>
        <authorList>
            <person name="Ooka H."/>
            <person name="Satoh K."/>
            <person name="Doi K."/>
            <person name="Nagata T."/>
            <person name="Otomo Y."/>
            <person name="Murakami K."/>
            <person name="Matsubara K."/>
            <person name="Osato N."/>
            <person name="Kawai J."/>
            <person name="Carninci P."/>
            <person name="Hayashizaki Y."/>
            <person name="Suzuki K."/>
            <person name="Kojima K."/>
            <person name="Takahara Y."/>
            <person name="Yamamoto K."/>
            <person name="Kikuchi S."/>
        </authorList>
    </citation>
    <scope>GENE FAMILY</scope>
    <scope>NOMENCLATURE</scope>
</reference>
<reference key="5">
    <citation type="journal article" date="2005" name="Plant Cell">
        <title>The NAC transcription factors NST1 and NST2 of Arabidopsis regulate secondary wall thickenings and are required for anther dehiscence.</title>
        <authorList>
            <person name="Mitsuda N."/>
            <person name="Seki M."/>
            <person name="Shinozaki K."/>
            <person name="Ohme-Takagi M."/>
        </authorList>
    </citation>
    <scope>FUNCTION</scope>
    <scope>TISSUE SPECIFICITY</scope>
</reference>